<feature type="chain" id="PRO_1000010473" description="Heat-inducible transcription repressor HrcA">
    <location>
        <begin position="1"/>
        <end position="324"/>
    </location>
</feature>
<sequence>MKPLSRRQEQVLQATVHHYVDTMEPVGSRTLVQRFSMPASSATIRSAMGALEQRGLLTQPHTSSGRIPSALGYRHYVDCLLPEPAATVLHLERELTGLSLGWAALDDLLLQLARRLTDFTGLMSLITRPTRTQPQLAAIRLVQSGERLLVMLVENSGHASHLNLRLPHATSDELDAIERWAEQQLRGGALNWEKLPTQLQRSGDVLRHALEHPSISAEPTTLVHGLSRLVAEPEFQSAQDLGPLLQLIDDEPMALISPGAEARVLIGQEHPQSALEACSVVQAPYRCGQEGTGHIALIGPMRMAYATACSAVERVARHLELLLS</sequence>
<dbReference type="EMBL" id="CP000097">
    <property type="protein sequence ID" value="ABB27055.1"/>
    <property type="molecule type" value="Genomic_DNA"/>
</dbReference>
<dbReference type="RefSeq" id="WP_011360839.1">
    <property type="nucleotide sequence ID" value="NC_007513.1"/>
</dbReference>
<dbReference type="SMR" id="Q3AW12"/>
<dbReference type="STRING" id="316279.Syncc9902_2097"/>
<dbReference type="KEGG" id="sye:Syncc9902_2097"/>
<dbReference type="eggNOG" id="COG1420">
    <property type="taxonomic scope" value="Bacteria"/>
</dbReference>
<dbReference type="HOGENOM" id="CLU_050019_1_0_3"/>
<dbReference type="OrthoDB" id="9783139at2"/>
<dbReference type="Proteomes" id="UP000002712">
    <property type="component" value="Chromosome"/>
</dbReference>
<dbReference type="GO" id="GO:0003677">
    <property type="term" value="F:DNA binding"/>
    <property type="evidence" value="ECO:0007669"/>
    <property type="project" value="InterPro"/>
</dbReference>
<dbReference type="GO" id="GO:0045892">
    <property type="term" value="P:negative regulation of DNA-templated transcription"/>
    <property type="evidence" value="ECO:0007669"/>
    <property type="project" value="UniProtKB-UniRule"/>
</dbReference>
<dbReference type="Gene3D" id="3.30.450.40">
    <property type="match status" value="1"/>
</dbReference>
<dbReference type="Gene3D" id="3.30.390.60">
    <property type="entry name" value="Heat-inducible transcription repressor hrca homolog, domain 3"/>
    <property type="match status" value="1"/>
</dbReference>
<dbReference type="Gene3D" id="1.10.10.10">
    <property type="entry name" value="Winged helix-like DNA-binding domain superfamily/Winged helix DNA-binding domain"/>
    <property type="match status" value="1"/>
</dbReference>
<dbReference type="HAMAP" id="MF_00081">
    <property type="entry name" value="HrcA"/>
    <property type="match status" value="1"/>
</dbReference>
<dbReference type="InterPro" id="IPR029016">
    <property type="entry name" value="GAF-like_dom_sf"/>
</dbReference>
<dbReference type="InterPro" id="IPR002571">
    <property type="entry name" value="HrcA"/>
</dbReference>
<dbReference type="InterPro" id="IPR021153">
    <property type="entry name" value="HrcA_C"/>
</dbReference>
<dbReference type="InterPro" id="IPR036388">
    <property type="entry name" value="WH-like_DNA-bd_sf"/>
</dbReference>
<dbReference type="InterPro" id="IPR036390">
    <property type="entry name" value="WH_DNA-bd_sf"/>
</dbReference>
<dbReference type="InterPro" id="IPR023120">
    <property type="entry name" value="WHTH_transcript_rep_HrcA_IDD"/>
</dbReference>
<dbReference type="NCBIfam" id="TIGR00331">
    <property type="entry name" value="hrcA"/>
    <property type="match status" value="1"/>
</dbReference>
<dbReference type="PANTHER" id="PTHR34824">
    <property type="entry name" value="HEAT-INDUCIBLE TRANSCRIPTION REPRESSOR HRCA"/>
    <property type="match status" value="1"/>
</dbReference>
<dbReference type="PANTHER" id="PTHR34824:SF1">
    <property type="entry name" value="HEAT-INDUCIBLE TRANSCRIPTION REPRESSOR HRCA"/>
    <property type="match status" value="1"/>
</dbReference>
<dbReference type="Pfam" id="PF01628">
    <property type="entry name" value="HrcA"/>
    <property type="match status" value="1"/>
</dbReference>
<dbReference type="PIRSF" id="PIRSF005485">
    <property type="entry name" value="HrcA"/>
    <property type="match status" value="1"/>
</dbReference>
<dbReference type="SUPFAM" id="SSF55781">
    <property type="entry name" value="GAF domain-like"/>
    <property type="match status" value="1"/>
</dbReference>
<dbReference type="SUPFAM" id="SSF46785">
    <property type="entry name" value="Winged helix' DNA-binding domain"/>
    <property type="match status" value="1"/>
</dbReference>
<comment type="function">
    <text evidence="1">Negative regulator of class I heat shock genes (grpE-dnaK-dnaJ and groELS operons). Prevents heat-shock induction of these operons.</text>
</comment>
<comment type="similarity">
    <text evidence="1">Belongs to the HrcA family.</text>
</comment>
<proteinExistence type="inferred from homology"/>
<gene>
    <name evidence="1" type="primary">hrcA</name>
    <name type="ordered locus">Syncc9902_2097</name>
</gene>
<keyword id="KW-1185">Reference proteome</keyword>
<keyword id="KW-0678">Repressor</keyword>
<keyword id="KW-0346">Stress response</keyword>
<keyword id="KW-0804">Transcription</keyword>
<keyword id="KW-0805">Transcription regulation</keyword>
<evidence type="ECO:0000255" key="1">
    <source>
        <dbReference type="HAMAP-Rule" id="MF_00081"/>
    </source>
</evidence>
<name>HRCA_SYNS9</name>
<organism>
    <name type="scientific">Synechococcus sp. (strain CC9902)</name>
    <dbReference type="NCBI Taxonomy" id="316279"/>
    <lineage>
        <taxon>Bacteria</taxon>
        <taxon>Bacillati</taxon>
        <taxon>Cyanobacteriota</taxon>
        <taxon>Cyanophyceae</taxon>
        <taxon>Synechococcales</taxon>
        <taxon>Synechococcaceae</taxon>
        <taxon>Synechococcus</taxon>
    </lineage>
</organism>
<accession>Q3AW12</accession>
<protein>
    <recommendedName>
        <fullName evidence="1">Heat-inducible transcription repressor HrcA</fullName>
    </recommendedName>
</protein>
<reference key="1">
    <citation type="submission" date="2005-08" db="EMBL/GenBank/DDBJ databases">
        <title>Complete sequence of Synechococcus sp. CC9902.</title>
        <authorList>
            <person name="Copeland A."/>
            <person name="Lucas S."/>
            <person name="Lapidus A."/>
            <person name="Barry K."/>
            <person name="Detter J.C."/>
            <person name="Glavina T."/>
            <person name="Hammon N."/>
            <person name="Israni S."/>
            <person name="Pitluck S."/>
            <person name="Martinez M."/>
            <person name="Schmutz J."/>
            <person name="Larimer F."/>
            <person name="Land M."/>
            <person name="Kyrpides N."/>
            <person name="Ivanova N."/>
            <person name="Richardson P."/>
        </authorList>
    </citation>
    <scope>NUCLEOTIDE SEQUENCE [LARGE SCALE GENOMIC DNA]</scope>
    <source>
        <strain>CC9902</strain>
    </source>
</reference>